<comment type="function">
    <text evidence="1">Component of the small ribosomal subunit. The ribosome is a large ribonucleoprotein complex responsible for the synthesis of proteins in the cell. Part of the small subunit (SSU) processome, first precursor of the small eukaryotic ribosomal subunit. During the assembly of the SSU processome in the nucleolus, many ribosome biogenesis factors, an RNA chaperone and ribosomal proteins associate with the nascent pre-rRNA and work in concert to generate RNA folding, modifications, rearrangements and cleavage as well as targeted degradation of pre-ribosomal RNA by the RNA exosome.</text>
</comment>
<comment type="subunit">
    <text evidence="1">Component of the small ribosomal subunit. Identified in a IGF2BP1-dependent mRNP granule complex containing untranslated mRNAs. Part of the small subunit (SSU) processome, composed of more than 70 proteins and the RNA chaperone small nucleolar RNA (snoRNA) U3.</text>
</comment>
<comment type="subcellular location">
    <subcellularLocation>
        <location evidence="1">Cytoplasm</location>
    </subcellularLocation>
    <subcellularLocation>
        <location evidence="1">Membrane</location>
        <topology evidence="1">Lipid-anchor</topology>
    </subcellularLocation>
    <subcellularLocation>
        <location evidence="1">Nucleus</location>
        <location evidence="1">Nucleolus</location>
    </subcellularLocation>
    <text evidence="1">Localized in cytoplasmic mRNP granules containing untranslated mRNAs.</text>
</comment>
<comment type="similarity">
    <text evidence="3">Belongs to the eukaryotic ribosomal protein eS8 family.</text>
</comment>
<sequence>MGISRDSAHKRRATGGKRKSLRKKRKFELGRPAANTKLGSGRVHKVRTRGGNTKLRALRLETGNFAWASEGVARKTRIADVVYNASNNELVRTKTLVKNSIVVIDATPFRQWYEAHYVLPLGRKRNPKHAQKEDENDVLTKKRSEKVMKKYLERQKYGKVEQALEDQFTSGRILACISSRPGQCGRSDGYILEGKELEFYLKKIKSKK</sequence>
<dbReference type="EMBL" id="AE014297">
    <property type="protein sequence ID" value="AAN14192.1"/>
    <property type="molecule type" value="Genomic_DNA"/>
</dbReference>
<dbReference type="EMBL" id="AY118424">
    <property type="protein sequence ID" value="AAM48453.1"/>
    <property type="molecule type" value="mRNA"/>
</dbReference>
<dbReference type="EMBL" id="AY118446">
    <property type="protein sequence ID" value="AAM48475.1"/>
    <property type="molecule type" value="mRNA"/>
</dbReference>
<dbReference type="RefSeq" id="NP_001247362.1">
    <property type="nucleotide sequence ID" value="NM_001260433.3"/>
</dbReference>
<dbReference type="RefSeq" id="NP_001287596.1">
    <property type="nucleotide sequence ID" value="NM_001300667.1"/>
</dbReference>
<dbReference type="RefSeq" id="NP_001287597.1">
    <property type="nucleotide sequence ID" value="NM_001300668.1"/>
</dbReference>
<dbReference type="RefSeq" id="NP_651740.1">
    <property type="nucleotide sequence ID" value="NM_143483.3"/>
</dbReference>
<dbReference type="PDB" id="4V6W">
    <property type="method" value="EM"/>
    <property type="resolution" value="6.00 A"/>
    <property type="chains" value="AI=1-208"/>
</dbReference>
<dbReference type="PDB" id="6XU6">
    <property type="method" value="EM"/>
    <property type="resolution" value="3.50 A"/>
    <property type="chains" value="AI=2-208"/>
</dbReference>
<dbReference type="PDB" id="6XU7">
    <property type="method" value="EM"/>
    <property type="resolution" value="4.90 A"/>
    <property type="chains" value="AI=2-208"/>
</dbReference>
<dbReference type="PDB" id="6XU8">
    <property type="method" value="EM"/>
    <property type="resolution" value="3.00 A"/>
    <property type="chains" value="AI=2-208"/>
</dbReference>
<dbReference type="PDBsum" id="4V6W"/>
<dbReference type="PDBsum" id="6XU6"/>
<dbReference type="PDBsum" id="6XU7"/>
<dbReference type="PDBsum" id="6XU8"/>
<dbReference type="EMDB" id="EMD-10622"/>
<dbReference type="EMDB" id="EMD-10623"/>
<dbReference type="EMDB" id="EMD-10624"/>
<dbReference type="SMR" id="Q8MLY8"/>
<dbReference type="BioGRID" id="68391">
    <property type="interactions" value="124"/>
</dbReference>
<dbReference type="FunCoup" id="Q8MLY8">
    <property type="interactions" value="1184"/>
</dbReference>
<dbReference type="IntAct" id="Q8MLY8">
    <property type="interactions" value="5"/>
</dbReference>
<dbReference type="MINT" id="Q8MLY8"/>
<dbReference type="STRING" id="7227.FBpp0099686"/>
<dbReference type="PaxDb" id="7227-FBpp0099686"/>
<dbReference type="EnsemblMetazoa" id="FBtr0085489">
    <property type="protein sequence ID" value="FBpp0099686"/>
    <property type="gene ID" value="FBgn0039713"/>
</dbReference>
<dbReference type="EnsemblMetazoa" id="FBtr0310274">
    <property type="protein sequence ID" value="FBpp0301957"/>
    <property type="gene ID" value="FBgn0039713"/>
</dbReference>
<dbReference type="EnsemblMetazoa" id="FBtr0346158">
    <property type="protein sequence ID" value="FBpp0311986"/>
    <property type="gene ID" value="FBgn0039713"/>
</dbReference>
<dbReference type="EnsemblMetazoa" id="FBtr0346159">
    <property type="protein sequence ID" value="FBpp0311987"/>
    <property type="gene ID" value="FBgn0039713"/>
</dbReference>
<dbReference type="GeneID" id="43532"/>
<dbReference type="KEGG" id="dme:Dmel_CG7808"/>
<dbReference type="AGR" id="FB:FBgn0039713"/>
<dbReference type="CTD" id="6202"/>
<dbReference type="FlyBase" id="FBgn0039713">
    <property type="gene designation" value="RpS8"/>
</dbReference>
<dbReference type="VEuPathDB" id="VectorBase:FBgn0039713"/>
<dbReference type="eggNOG" id="KOG3283">
    <property type="taxonomic scope" value="Eukaryota"/>
</dbReference>
<dbReference type="GeneTree" id="ENSGT00390000012433"/>
<dbReference type="HOGENOM" id="CLU_080597_1_1_1"/>
<dbReference type="InParanoid" id="Q8MLY8"/>
<dbReference type="OMA" id="QRPHYRK"/>
<dbReference type="OrthoDB" id="1703270at2759"/>
<dbReference type="PhylomeDB" id="Q8MLY8"/>
<dbReference type="Reactome" id="R-DME-156827">
    <property type="pathway name" value="L13a-mediated translational silencing of Ceruloplasmin expression"/>
</dbReference>
<dbReference type="Reactome" id="R-DME-1799339">
    <property type="pathway name" value="SRP-dependent cotranslational protein targeting to membrane"/>
</dbReference>
<dbReference type="Reactome" id="R-DME-72649">
    <property type="pathway name" value="Translation initiation complex formation"/>
</dbReference>
<dbReference type="Reactome" id="R-DME-72689">
    <property type="pathway name" value="Formation of a pool of free 40S subunits"/>
</dbReference>
<dbReference type="Reactome" id="R-DME-72695">
    <property type="pathway name" value="Formation of the ternary complex, and subsequently, the 43S complex"/>
</dbReference>
<dbReference type="Reactome" id="R-DME-72702">
    <property type="pathway name" value="Ribosomal scanning and start codon recognition"/>
</dbReference>
<dbReference type="Reactome" id="R-DME-72706">
    <property type="pathway name" value="GTP hydrolysis and joining of the 60S ribosomal subunit"/>
</dbReference>
<dbReference type="Reactome" id="R-DME-975956">
    <property type="pathway name" value="Nonsense Mediated Decay (NMD) independent of the Exon Junction Complex (EJC)"/>
</dbReference>
<dbReference type="Reactome" id="R-DME-975957">
    <property type="pathway name" value="Nonsense Mediated Decay (NMD) enhanced by the Exon Junction Complex (EJC)"/>
</dbReference>
<dbReference type="BioGRID-ORCS" id="43532">
    <property type="hits" value="0 hits in 1 CRISPR screen"/>
</dbReference>
<dbReference type="ChiTaRS" id="RpS8">
    <property type="organism name" value="fly"/>
</dbReference>
<dbReference type="GenomeRNAi" id="43532"/>
<dbReference type="PRO" id="PR:Q8MLY8"/>
<dbReference type="Proteomes" id="UP000000803">
    <property type="component" value="Chromosome 3R"/>
</dbReference>
<dbReference type="Bgee" id="FBgn0039713">
    <property type="expression patterns" value="Expressed in ovarian sheath cell (Drosophila) in ovary and 284 other cell types or tissues"/>
</dbReference>
<dbReference type="ExpressionAtlas" id="Q8MLY8">
    <property type="expression patterns" value="baseline and differential"/>
</dbReference>
<dbReference type="GO" id="GO:0022626">
    <property type="term" value="C:cytosolic ribosome"/>
    <property type="evidence" value="ECO:0000314"/>
    <property type="project" value="FlyBase"/>
</dbReference>
<dbReference type="GO" id="GO:0022627">
    <property type="term" value="C:cytosolic small ribosomal subunit"/>
    <property type="evidence" value="ECO:0000250"/>
    <property type="project" value="FlyBase"/>
</dbReference>
<dbReference type="GO" id="GO:0016020">
    <property type="term" value="C:membrane"/>
    <property type="evidence" value="ECO:0007669"/>
    <property type="project" value="UniProtKB-SubCell"/>
</dbReference>
<dbReference type="GO" id="GO:0005730">
    <property type="term" value="C:nucleolus"/>
    <property type="evidence" value="ECO:0007669"/>
    <property type="project" value="UniProtKB-SubCell"/>
</dbReference>
<dbReference type="GO" id="GO:0032040">
    <property type="term" value="C:small-subunit processome"/>
    <property type="evidence" value="ECO:0000250"/>
    <property type="project" value="UniProtKB"/>
</dbReference>
<dbReference type="GO" id="GO:0003735">
    <property type="term" value="F:structural constituent of ribosome"/>
    <property type="evidence" value="ECO:0000314"/>
    <property type="project" value="FlyBase"/>
</dbReference>
<dbReference type="GO" id="GO:0002181">
    <property type="term" value="P:cytoplasmic translation"/>
    <property type="evidence" value="ECO:0000304"/>
    <property type="project" value="FlyBase"/>
</dbReference>
<dbReference type="GO" id="GO:0035167">
    <property type="term" value="P:larval lymph gland hemopoiesis"/>
    <property type="evidence" value="ECO:0000315"/>
    <property type="project" value="FlyBase"/>
</dbReference>
<dbReference type="GO" id="GO:0000462">
    <property type="term" value="P:maturation of SSU-rRNA from tricistronic rRNA transcript (SSU-rRNA, 5.8S rRNA, LSU-rRNA)"/>
    <property type="evidence" value="ECO:0000318"/>
    <property type="project" value="GO_Central"/>
</dbReference>
<dbReference type="GO" id="GO:0042274">
    <property type="term" value="P:ribosomal small subunit biogenesis"/>
    <property type="evidence" value="ECO:0000250"/>
    <property type="project" value="UniProtKB"/>
</dbReference>
<dbReference type="GO" id="GO:0006412">
    <property type="term" value="P:translation"/>
    <property type="evidence" value="ECO:0000250"/>
    <property type="project" value="FlyBase"/>
</dbReference>
<dbReference type="CDD" id="cd11380">
    <property type="entry name" value="Ribosomal_S8e_like"/>
    <property type="match status" value="1"/>
</dbReference>
<dbReference type="FunFam" id="1.10.168.20:FF:000001">
    <property type="entry name" value="40S ribosomal protein S8"/>
    <property type="match status" value="1"/>
</dbReference>
<dbReference type="FunFam" id="3.10.290.70:FF:000008">
    <property type="entry name" value="40S ribosomal protein S8"/>
    <property type="match status" value="1"/>
</dbReference>
<dbReference type="Gene3D" id="3.10.290.70">
    <property type="match status" value="1"/>
</dbReference>
<dbReference type="Gene3D" id="1.10.168.20">
    <property type="entry name" value="Ribosomal protein S8e, subdomain"/>
    <property type="match status" value="1"/>
</dbReference>
<dbReference type="InterPro" id="IPR001047">
    <property type="entry name" value="Ribosomal_eS8"/>
</dbReference>
<dbReference type="InterPro" id="IPR018283">
    <property type="entry name" value="Ribosomal_eS8_CS"/>
</dbReference>
<dbReference type="InterPro" id="IPR042563">
    <property type="entry name" value="Ribosomal_protein_eS8_euk"/>
</dbReference>
<dbReference type="InterPro" id="IPR022309">
    <property type="entry name" value="Ribosomal_Se8/biogenesis_NSA2"/>
</dbReference>
<dbReference type="NCBIfam" id="TIGR00307">
    <property type="entry name" value="eS8"/>
    <property type="match status" value="1"/>
</dbReference>
<dbReference type="PANTHER" id="PTHR10394">
    <property type="entry name" value="40S RIBOSOMAL PROTEIN S8"/>
    <property type="match status" value="1"/>
</dbReference>
<dbReference type="Pfam" id="PF01201">
    <property type="entry name" value="Ribosomal_S8e"/>
    <property type="match status" value="1"/>
</dbReference>
<dbReference type="PROSITE" id="PS01193">
    <property type="entry name" value="RIBOSOMAL_S8E"/>
    <property type="match status" value="1"/>
</dbReference>
<protein>
    <recommendedName>
        <fullName evidence="3">Small ribosomal subunit protein eS8</fullName>
    </recommendedName>
    <alternativeName>
        <fullName>40S ribosomal protein S8</fullName>
    </alternativeName>
</protein>
<organism>
    <name type="scientific">Drosophila melanogaster</name>
    <name type="common">Fruit fly</name>
    <dbReference type="NCBI Taxonomy" id="7227"/>
    <lineage>
        <taxon>Eukaryota</taxon>
        <taxon>Metazoa</taxon>
        <taxon>Ecdysozoa</taxon>
        <taxon>Arthropoda</taxon>
        <taxon>Hexapoda</taxon>
        <taxon>Insecta</taxon>
        <taxon>Pterygota</taxon>
        <taxon>Neoptera</taxon>
        <taxon>Endopterygota</taxon>
        <taxon>Diptera</taxon>
        <taxon>Brachycera</taxon>
        <taxon>Muscomorpha</taxon>
        <taxon>Ephydroidea</taxon>
        <taxon>Drosophilidae</taxon>
        <taxon>Drosophila</taxon>
        <taxon>Sophophora</taxon>
    </lineage>
</organism>
<proteinExistence type="evidence at protein level"/>
<evidence type="ECO:0000250" key="1">
    <source>
        <dbReference type="UniProtKB" id="P62241"/>
    </source>
</evidence>
<evidence type="ECO:0000256" key="2">
    <source>
        <dbReference type="SAM" id="MobiDB-lite"/>
    </source>
</evidence>
<evidence type="ECO:0000305" key="3"/>
<reference key="1">
    <citation type="journal article" date="2000" name="Science">
        <title>The genome sequence of Drosophila melanogaster.</title>
        <authorList>
            <person name="Adams M.D."/>
            <person name="Celniker S.E."/>
            <person name="Holt R.A."/>
            <person name="Evans C.A."/>
            <person name="Gocayne J.D."/>
            <person name="Amanatides P.G."/>
            <person name="Scherer S.E."/>
            <person name="Li P.W."/>
            <person name="Hoskins R.A."/>
            <person name="Galle R.F."/>
            <person name="George R.A."/>
            <person name="Lewis S.E."/>
            <person name="Richards S."/>
            <person name="Ashburner M."/>
            <person name="Henderson S.N."/>
            <person name="Sutton G.G."/>
            <person name="Wortman J.R."/>
            <person name="Yandell M.D."/>
            <person name="Zhang Q."/>
            <person name="Chen L.X."/>
            <person name="Brandon R.C."/>
            <person name="Rogers Y.-H.C."/>
            <person name="Blazej R.G."/>
            <person name="Champe M."/>
            <person name="Pfeiffer B.D."/>
            <person name="Wan K.H."/>
            <person name="Doyle C."/>
            <person name="Baxter E.G."/>
            <person name="Helt G."/>
            <person name="Nelson C.R."/>
            <person name="Miklos G.L.G."/>
            <person name="Abril J.F."/>
            <person name="Agbayani A."/>
            <person name="An H.-J."/>
            <person name="Andrews-Pfannkoch C."/>
            <person name="Baldwin D."/>
            <person name="Ballew R.M."/>
            <person name="Basu A."/>
            <person name="Baxendale J."/>
            <person name="Bayraktaroglu L."/>
            <person name="Beasley E.M."/>
            <person name="Beeson K.Y."/>
            <person name="Benos P.V."/>
            <person name="Berman B.P."/>
            <person name="Bhandari D."/>
            <person name="Bolshakov S."/>
            <person name="Borkova D."/>
            <person name="Botchan M.R."/>
            <person name="Bouck J."/>
            <person name="Brokstein P."/>
            <person name="Brottier P."/>
            <person name="Burtis K.C."/>
            <person name="Busam D.A."/>
            <person name="Butler H."/>
            <person name="Cadieu E."/>
            <person name="Center A."/>
            <person name="Chandra I."/>
            <person name="Cherry J.M."/>
            <person name="Cawley S."/>
            <person name="Dahlke C."/>
            <person name="Davenport L.B."/>
            <person name="Davies P."/>
            <person name="de Pablos B."/>
            <person name="Delcher A."/>
            <person name="Deng Z."/>
            <person name="Mays A.D."/>
            <person name="Dew I."/>
            <person name="Dietz S.M."/>
            <person name="Dodson K."/>
            <person name="Doup L.E."/>
            <person name="Downes M."/>
            <person name="Dugan-Rocha S."/>
            <person name="Dunkov B.C."/>
            <person name="Dunn P."/>
            <person name="Durbin K.J."/>
            <person name="Evangelista C.C."/>
            <person name="Ferraz C."/>
            <person name="Ferriera S."/>
            <person name="Fleischmann W."/>
            <person name="Fosler C."/>
            <person name="Gabrielian A.E."/>
            <person name="Garg N.S."/>
            <person name="Gelbart W.M."/>
            <person name="Glasser K."/>
            <person name="Glodek A."/>
            <person name="Gong F."/>
            <person name="Gorrell J.H."/>
            <person name="Gu Z."/>
            <person name="Guan P."/>
            <person name="Harris M."/>
            <person name="Harris N.L."/>
            <person name="Harvey D.A."/>
            <person name="Heiman T.J."/>
            <person name="Hernandez J.R."/>
            <person name="Houck J."/>
            <person name="Hostin D."/>
            <person name="Houston K.A."/>
            <person name="Howland T.J."/>
            <person name="Wei M.-H."/>
            <person name="Ibegwam C."/>
            <person name="Jalali M."/>
            <person name="Kalush F."/>
            <person name="Karpen G.H."/>
            <person name="Ke Z."/>
            <person name="Kennison J.A."/>
            <person name="Ketchum K.A."/>
            <person name="Kimmel B.E."/>
            <person name="Kodira C.D."/>
            <person name="Kraft C.L."/>
            <person name="Kravitz S."/>
            <person name="Kulp D."/>
            <person name="Lai Z."/>
            <person name="Lasko P."/>
            <person name="Lei Y."/>
            <person name="Levitsky A.A."/>
            <person name="Li J.H."/>
            <person name="Li Z."/>
            <person name="Liang Y."/>
            <person name="Lin X."/>
            <person name="Liu X."/>
            <person name="Mattei B."/>
            <person name="McIntosh T.C."/>
            <person name="McLeod M.P."/>
            <person name="McPherson D."/>
            <person name="Merkulov G."/>
            <person name="Milshina N.V."/>
            <person name="Mobarry C."/>
            <person name="Morris J."/>
            <person name="Moshrefi A."/>
            <person name="Mount S.M."/>
            <person name="Moy M."/>
            <person name="Murphy B."/>
            <person name="Murphy L."/>
            <person name="Muzny D.M."/>
            <person name="Nelson D.L."/>
            <person name="Nelson D.R."/>
            <person name="Nelson K.A."/>
            <person name="Nixon K."/>
            <person name="Nusskern D.R."/>
            <person name="Pacleb J.M."/>
            <person name="Palazzolo M."/>
            <person name="Pittman G.S."/>
            <person name="Pan S."/>
            <person name="Pollard J."/>
            <person name="Puri V."/>
            <person name="Reese M.G."/>
            <person name="Reinert K."/>
            <person name="Remington K."/>
            <person name="Saunders R.D.C."/>
            <person name="Scheeler F."/>
            <person name="Shen H."/>
            <person name="Shue B.C."/>
            <person name="Siden-Kiamos I."/>
            <person name="Simpson M."/>
            <person name="Skupski M.P."/>
            <person name="Smith T.J."/>
            <person name="Spier E."/>
            <person name="Spradling A.C."/>
            <person name="Stapleton M."/>
            <person name="Strong R."/>
            <person name="Sun E."/>
            <person name="Svirskas R."/>
            <person name="Tector C."/>
            <person name="Turner R."/>
            <person name="Venter E."/>
            <person name="Wang A.H."/>
            <person name="Wang X."/>
            <person name="Wang Z.-Y."/>
            <person name="Wassarman D.A."/>
            <person name="Weinstock G.M."/>
            <person name="Weissenbach J."/>
            <person name="Williams S.M."/>
            <person name="Woodage T."/>
            <person name="Worley K.C."/>
            <person name="Wu D."/>
            <person name="Yang S."/>
            <person name="Yao Q.A."/>
            <person name="Ye J."/>
            <person name="Yeh R.-F."/>
            <person name="Zaveri J.S."/>
            <person name="Zhan M."/>
            <person name="Zhang G."/>
            <person name="Zhao Q."/>
            <person name="Zheng L."/>
            <person name="Zheng X.H."/>
            <person name="Zhong F.N."/>
            <person name="Zhong W."/>
            <person name="Zhou X."/>
            <person name="Zhu S.C."/>
            <person name="Zhu X."/>
            <person name="Smith H.O."/>
            <person name="Gibbs R.A."/>
            <person name="Myers E.W."/>
            <person name="Rubin G.M."/>
            <person name="Venter J.C."/>
        </authorList>
    </citation>
    <scope>NUCLEOTIDE SEQUENCE [LARGE SCALE GENOMIC DNA]</scope>
    <source>
        <strain>Berkeley</strain>
    </source>
</reference>
<reference key="2">
    <citation type="journal article" date="2002" name="Genome Biol.">
        <title>Annotation of the Drosophila melanogaster euchromatic genome: a systematic review.</title>
        <authorList>
            <person name="Misra S."/>
            <person name="Crosby M.A."/>
            <person name="Mungall C.J."/>
            <person name="Matthews B.B."/>
            <person name="Campbell K.S."/>
            <person name="Hradecky P."/>
            <person name="Huang Y."/>
            <person name="Kaminker J.S."/>
            <person name="Millburn G.H."/>
            <person name="Prochnik S.E."/>
            <person name="Smith C.D."/>
            <person name="Tupy J.L."/>
            <person name="Whitfield E.J."/>
            <person name="Bayraktaroglu L."/>
            <person name="Berman B.P."/>
            <person name="Bettencourt B.R."/>
            <person name="Celniker S.E."/>
            <person name="de Grey A.D.N.J."/>
            <person name="Drysdale R.A."/>
            <person name="Harris N.L."/>
            <person name="Richter J."/>
            <person name="Russo S."/>
            <person name="Schroeder A.J."/>
            <person name="Shu S.Q."/>
            <person name="Stapleton M."/>
            <person name="Yamada C."/>
            <person name="Ashburner M."/>
            <person name="Gelbart W.M."/>
            <person name="Rubin G.M."/>
            <person name="Lewis S.E."/>
        </authorList>
    </citation>
    <scope>GENOME REANNOTATION</scope>
    <source>
        <strain>Berkeley</strain>
    </source>
</reference>
<reference key="3">
    <citation type="journal article" date="2002" name="Genome Biol.">
        <title>A Drosophila full-length cDNA resource.</title>
        <authorList>
            <person name="Stapleton M."/>
            <person name="Carlson J.W."/>
            <person name="Brokstein P."/>
            <person name="Yu C."/>
            <person name="Champe M."/>
            <person name="George R.A."/>
            <person name="Guarin H."/>
            <person name="Kronmiller B."/>
            <person name="Pacleb J.M."/>
            <person name="Park S."/>
            <person name="Wan K.H."/>
            <person name="Rubin G.M."/>
            <person name="Celniker S.E."/>
        </authorList>
    </citation>
    <scope>NUCLEOTIDE SEQUENCE [LARGE SCALE MRNA]</scope>
    <source>
        <strain>Berkeley</strain>
        <tissue>Embryo</tissue>
        <tissue>Head</tissue>
    </source>
</reference>
<reference key="4">
    <citation type="journal article" date="2013" name="Nature">
        <title>Structures of the human and Drosophila 80S ribosome.</title>
        <authorList>
            <person name="Anger A.M."/>
            <person name="Armache J.P."/>
            <person name="Berninghausen O."/>
            <person name="Habeck M."/>
            <person name="Subklewe M."/>
            <person name="Wilson D.N."/>
            <person name="Beckmann R."/>
        </authorList>
    </citation>
    <scope>STRUCTURE BY ELECTRON MICROSCOPY (6.0 ANGSTROMS) OF THE 80S RIBOSOME</scope>
</reference>
<gene>
    <name type="primary">RpS8</name>
    <name type="ORF">CG7808</name>
</gene>
<feature type="chain" id="PRO_0000122249" description="Small ribosomal subunit protein eS8">
    <location>
        <begin position="1"/>
        <end position="208"/>
    </location>
</feature>
<feature type="region of interest" description="Disordered" evidence="2">
    <location>
        <begin position="1"/>
        <end position="23"/>
    </location>
</feature>
<feature type="compositionally biased region" description="Basic residues" evidence="2">
    <location>
        <begin position="8"/>
        <end position="23"/>
    </location>
</feature>
<keyword id="KW-0002">3D-structure</keyword>
<keyword id="KW-0963">Cytoplasm</keyword>
<keyword id="KW-0449">Lipoprotein</keyword>
<keyword id="KW-0472">Membrane</keyword>
<keyword id="KW-0539">Nucleus</keyword>
<keyword id="KW-1185">Reference proteome</keyword>
<keyword id="KW-0687">Ribonucleoprotein</keyword>
<keyword id="KW-0689">Ribosomal protein</keyword>
<accession>Q8MLY8</accession>
<accession>Q9VAF1</accession>
<name>RS8_DROME</name>